<evidence type="ECO:0000255" key="1">
    <source>
        <dbReference type="HAMAP-Rule" id="MF_00006"/>
    </source>
</evidence>
<sequence length="463" mass="52604">MSNKAWGGRFETQPEEWVDDFNASIDFDKNLIKQDVQGSIAHATMLAKQHIITDDEAQSIINELKNIQSDFEEGKLKFKASLEDIHLNIEHELIQRIGEAGGKLHTGRSRNDQVATDMHLYTKEQVQYIIELIASFQETIVQLADQHVDTIMPGYTHLQRAQPISFAHHIMTYFWMLERDKGRFMDSLKRIDISPLGAAALSGTTHPIDRHLTQELLGFANLYENSLDAVSDRDYIVETLHHISLTMVHLSRFAEEIIFWSTDEAKFITLSDAFSTGSSIMPQKKNPDMAELIRGKVGRTTGHLMSMLVTLKGLPLAYNKDMQEDKEGLFDAVHTLKGSLRIFEGMVASMKVNSNRLSQTVKNDFSNATELADYLVSKSVPFRTAHEIVGKIVLNCIHKGIYLLDVPLSEYQEHHENIEEDIYDYLTPENCLKRRQSYGSTGQESVKHQLKVAKALLKDNESK</sequence>
<gene>
    <name evidence="1" type="primary">argH</name>
    <name type="ordered locus">SERP0548</name>
</gene>
<reference key="1">
    <citation type="journal article" date="2005" name="J. Bacteriol.">
        <title>Insights on evolution of virulence and resistance from the complete genome analysis of an early methicillin-resistant Staphylococcus aureus strain and a biofilm-producing methicillin-resistant Staphylococcus epidermidis strain.</title>
        <authorList>
            <person name="Gill S.R."/>
            <person name="Fouts D.E."/>
            <person name="Archer G.L."/>
            <person name="Mongodin E.F."/>
            <person name="DeBoy R.T."/>
            <person name="Ravel J."/>
            <person name="Paulsen I.T."/>
            <person name="Kolonay J.F."/>
            <person name="Brinkac L.M."/>
            <person name="Beanan M.J."/>
            <person name="Dodson R.J."/>
            <person name="Daugherty S.C."/>
            <person name="Madupu R."/>
            <person name="Angiuoli S.V."/>
            <person name="Durkin A.S."/>
            <person name="Haft D.H."/>
            <person name="Vamathevan J.J."/>
            <person name="Khouri H."/>
            <person name="Utterback T.R."/>
            <person name="Lee C."/>
            <person name="Dimitrov G."/>
            <person name="Jiang L."/>
            <person name="Qin H."/>
            <person name="Weidman J."/>
            <person name="Tran K."/>
            <person name="Kang K.H."/>
            <person name="Hance I.R."/>
            <person name="Nelson K.E."/>
            <person name="Fraser C.M."/>
        </authorList>
    </citation>
    <scope>NUCLEOTIDE SEQUENCE [LARGE SCALE GENOMIC DNA]</scope>
    <source>
        <strain>ATCC 35984 / DSM 28319 / BCRC 17069 / CCUG 31568 / BM 3577 / RP62A</strain>
    </source>
</reference>
<name>ARLY_STAEQ</name>
<comment type="catalytic activity">
    <reaction evidence="1">
        <text>2-(N(omega)-L-arginino)succinate = fumarate + L-arginine</text>
        <dbReference type="Rhea" id="RHEA:24020"/>
        <dbReference type="ChEBI" id="CHEBI:29806"/>
        <dbReference type="ChEBI" id="CHEBI:32682"/>
        <dbReference type="ChEBI" id="CHEBI:57472"/>
        <dbReference type="EC" id="4.3.2.1"/>
    </reaction>
</comment>
<comment type="pathway">
    <text evidence="1">Amino-acid biosynthesis; L-arginine biosynthesis; L-arginine from L-ornithine and carbamoyl phosphate: step 3/3.</text>
</comment>
<comment type="subcellular location">
    <subcellularLocation>
        <location evidence="1">Cytoplasm</location>
    </subcellularLocation>
</comment>
<comment type="similarity">
    <text evidence="1">Belongs to the lyase 1 family. Argininosuccinate lyase subfamily.</text>
</comment>
<protein>
    <recommendedName>
        <fullName evidence="1">Argininosuccinate lyase</fullName>
        <shortName evidence="1">ASAL</shortName>
        <ecNumber evidence="1">4.3.2.1</ecNumber>
    </recommendedName>
    <alternativeName>
        <fullName evidence="1">Arginosuccinase</fullName>
    </alternativeName>
</protein>
<organism>
    <name type="scientific">Staphylococcus epidermidis (strain ATCC 35984 / DSM 28319 / BCRC 17069 / CCUG 31568 / BM 3577 / RP62A)</name>
    <dbReference type="NCBI Taxonomy" id="176279"/>
    <lineage>
        <taxon>Bacteria</taxon>
        <taxon>Bacillati</taxon>
        <taxon>Bacillota</taxon>
        <taxon>Bacilli</taxon>
        <taxon>Bacillales</taxon>
        <taxon>Staphylococcaceae</taxon>
        <taxon>Staphylococcus</taxon>
    </lineage>
</organism>
<keyword id="KW-0028">Amino-acid biosynthesis</keyword>
<keyword id="KW-0055">Arginine biosynthesis</keyword>
<keyword id="KW-0963">Cytoplasm</keyword>
<keyword id="KW-0456">Lyase</keyword>
<keyword id="KW-1185">Reference proteome</keyword>
<accession>Q5HQK1</accession>
<dbReference type="EC" id="4.3.2.1" evidence="1"/>
<dbReference type="EMBL" id="CP000029">
    <property type="protein sequence ID" value="AAW53919.1"/>
    <property type="molecule type" value="Genomic_DNA"/>
</dbReference>
<dbReference type="RefSeq" id="WP_001831901.1">
    <property type="nucleotide sequence ID" value="NC_002976.3"/>
</dbReference>
<dbReference type="SMR" id="Q5HQK1"/>
<dbReference type="STRING" id="176279.SERP0548"/>
<dbReference type="KEGG" id="ser:SERP0548"/>
<dbReference type="eggNOG" id="COG0165">
    <property type="taxonomic scope" value="Bacteria"/>
</dbReference>
<dbReference type="HOGENOM" id="CLU_027272_2_3_9"/>
<dbReference type="UniPathway" id="UPA00068">
    <property type="reaction ID" value="UER00114"/>
</dbReference>
<dbReference type="Proteomes" id="UP000000531">
    <property type="component" value="Chromosome"/>
</dbReference>
<dbReference type="GO" id="GO:0005829">
    <property type="term" value="C:cytosol"/>
    <property type="evidence" value="ECO:0007669"/>
    <property type="project" value="TreeGrafter"/>
</dbReference>
<dbReference type="GO" id="GO:0004056">
    <property type="term" value="F:argininosuccinate lyase activity"/>
    <property type="evidence" value="ECO:0007669"/>
    <property type="project" value="UniProtKB-UniRule"/>
</dbReference>
<dbReference type="GO" id="GO:0042450">
    <property type="term" value="P:arginine biosynthetic process via ornithine"/>
    <property type="evidence" value="ECO:0007669"/>
    <property type="project" value="InterPro"/>
</dbReference>
<dbReference type="GO" id="GO:0006526">
    <property type="term" value="P:L-arginine biosynthetic process"/>
    <property type="evidence" value="ECO:0007669"/>
    <property type="project" value="UniProtKB-UniRule"/>
</dbReference>
<dbReference type="CDD" id="cd01359">
    <property type="entry name" value="Argininosuccinate_lyase"/>
    <property type="match status" value="1"/>
</dbReference>
<dbReference type="FunFam" id="1.10.275.10:FF:000002">
    <property type="entry name" value="Argininosuccinate lyase"/>
    <property type="match status" value="1"/>
</dbReference>
<dbReference type="FunFam" id="1.10.40.30:FF:000001">
    <property type="entry name" value="Argininosuccinate lyase"/>
    <property type="match status" value="1"/>
</dbReference>
<dbReference type="FunFam" id="1.20.200.10:FF:000015">
    <property type="entry name" value="argininosuccinate lyase isoform X2"/>
    <property type="match status" value="1"/>
</dbReference>
<dbReference type="Gene3D" id="1.10.40.30">
    <property type="entry name" value="Fumarase/aspartase (C-terminal domain)"/>
    <property type="match status" value="1"/>
</dbReference>
<dbReference type="Gene3D" id="1.20.200.10">
    <property type="entry name" value="Fumarase/aspartase (Central domain)"/>
    <property type="match status" value="1"/>
</dbReference>
<dbReference type="Gene3D" id="1.10.275.10">
    <property type="entry name" value="Fumarase/aspartase (N-terminal domain)"/>
    <property type="match status" value="1"/>
</dbReference>
<dbReference type="HAMAP" id="MF_00006">
    <property type="entry name" value="Arg_succ_lyase"/>
    <property type="match status" value="1"/>
</dbReference>
<dbReference type="InterPro" id="IPR029419">
    <property type="entry name" value="Arg_succ_lyase_C"/>
</dbReference>
<dbReference type="InterPro" id="IPR009049">
    <property type="entry name" value="Argininosuccinate_lyase"/>
</dbReference>
<dbReference type="InterPro" id="IPR024083">
    <property type="entry name" value="Fumarase/histidase_N"/>
</dbReference>
<dbReference type="InterPro" id="IPR020557">
    <property type="entry name" value="Fumarate_lyase_CS"/>
</dbReference>
<dbReference type="InterPro" id="IPR000362">
    <property type="entry name" value="Fumarate_lyase_fam"/>
</dbReference>
<dbReference type="InterPro" id="IPR022761">
    <property type="entry name" value="Fumarate_lyase_N"/>
</dbReference>
<dbReference type="InterPro" id="IPR008948">
    <property type="entry name" value="L-Aspartase-like"/>
</dbReference>
<dbReference type="NCBIfam" id="TIGR00838">
    <property type="entry name" value="argH"/>
    <property type="match status" value="1"/>
</dbReference>
<dbReference type="PANTHER" id="PTHR43814">
    <property type="entry name" value="ARGININOSUCCINATE LYASE"/>
    <property type="match status" value="1"/>
</dbReference>
<dbReference type="PANTHER" id="PTHR43814:SF1">
    <property type="entry name" value="ARGININOSUCCINATE LYASE"/>
    <property type="match status" value="1"/>
</dbReference>
<dbReference type="Pfam" id="PF14698">
    <property type="entry name" value="ASL_C2"/>
    <property type="match status" value="1"/>
</dbReference>
<dbReference type="Pfam" id="PF00206">
    <property type="entry name" value="Lyase_1"/>
    <property type="match status" value="1"/>
</dbReference>
<dbReference type="PRINTS" id="PR00145">
    <property type="entry name" value="ARGSUCLYASE"/>
</dbReference>
<dbReference type="PRINTS" id="PR00149">
    <property type="entry name" value="FUMRATELYASE"/>
</dbReference>
<dbReference type="SUPFAM" id="SSF48557">
    <property type="entry name" value="L-aspartase-like"/>
    <property type="match status" value="1"/>
</dbReference>
<dbReference type="PROSITE" id="PS00163">
    <property type="entry name" value="FUMARATE_LYASES"/>
    <property type="match status" value="1"/>
</dbReference>
<proteinExistence type="inferred from homology"/>
<feature type="chain" id="PRO_0000137828" description="Argininosuccinate lyase">
    <location>
        <begin position="1"/>
        <end position="463"/>
    </location>
</feature>